<sequence>MAVETSHDAELTWSLVLPVKPLARAKTRMAEAAGPLRQALALAVAADTVAAALRCAAVAEVIVVTDDPLAAAELSALGARVVPDEPDCGLNPALAHGAALARAARPRAGVGAMSADLPALRPAELGRALAAAAGFAESFVADAQGVGTTLYAVRPGVPFSPAFGPGSRARHAAQGARELAIEGLDSLRRDVDTPGDLRAALALGTGPRTAALAARMPAFSPGAETSRG</sequence>
<gene>
    <name evidence="1" type="primary">fbiD</name>
    <name type="ordered locus">Tcur_3458</name>
</gene>
<keyword id="KW-0342">GTP-binding</keyword>
<keyword id="KW-0547">Nucleotide-binding</keyword>
<keyword id="KW-0548">Nucleotidyltransferase</keyword>
<keyword id="KW-1185">Reference proteome</keyword>
<keyword id="KW-0808">Transferase</keyword>
<feature type="chain" id="PRO_0000398721" description="Phosphoenolpyruvate guanylyltransferase">
    <location>
        <begin position="1"/>
        <end position="228"/>
    </location>
</feature>
<feature type="binding site" evidence="1">
    <location>
        <position position="148"/>
    </location>
    <ligand>
        <name>phosphoenolpyruvate</name>
        <dbReference type="ChEBI" id="CHEBI:58702"/>
    </ligand>
</feature>
<feature type="binding site" evidence="1">
    <location>
        <position position="164"/>
    </location>
    <ligand>
        <name>phosphoenolpyruvate</name>
        <dbReference type="ChEBI" id="CHEBI:58702"/>
    </ligand>
</feature>
<feature type="binding site" evidence="1">
    <location>
        <position position="167"/>
    </location>
    <ligand>
        <name>phosphoenolpyruvate</name>
        <dbReference type="ChEBI" id="CHEBI:58702"/>
    </ligand>
</feature>
<reference key="1">
    <citation type="journal article" date="2011" name="Stand. Genomic Sci.">
        <title>Complete genome sequence of Thermomonospora curvata type strain (B9).</title>
        <authorList>
            <person name="Chertkov O."/>
            <person name="Sikorski J."/>
            <person name="Nolan M."/>
            <person name="Lapidus A."/>
            <person name="Lucas S."/>
            <person name="Del Rio T.G."/>
            <person name="Tice H."/>
            <person name="Cheng J.F."/>
            <person name="Goodwin L."/>
            <person name="Pitluck S."/>
            <person name="Liolios K."/>
            <person name="Ivanova N."/>
            <person name="Mavromatis K."/>
            <person name="Mikhailova N."/>
            <person name="Ovchinnikova G."/>
            <person name="Pati A."/>
            <person name="Chen A."/>
            <person name="Palaniappan K."/>
            <person name="Djao O.D."/>
            <person name="Land M."/>
            <person name="Hauser L."/>
            <person name="Chang Y.J."/>
            <person name="Jeffries C.D."/>
            <person name="Brettin T."/>
            <person name="Han C."/>
            <person name="Detter J.C."/>
            <person name="Rohde M."/>
            <person name="Goeker M."/>
            <person name="Woyke T."/>
            <person name="Bristow J."/>
            <person name="Eisen J.A."/>
            <person name="Markowitz V."/>
            <person name="Hugenholtz P."/>
            <person name="Klenk H.P."/>
            <person name="Kyrpides N.C."/>
        </authorList>
    </citation>
    <scope>NUCLEOTIDE SEQUENCE [LARGE SCALE GENOMIC DNA]</scope>
    <source>
        <strain>ATCC 19995 / DSM 43183 / JCM 3096 / KCTC 9072 / NBRC 15933 / NCIMB 10081 / Henssen B9</strain>
    </source>
</reference>
<protein>
    <recommendedName>
        <fullName evidence="1">Phosphoenolpyruvate guanylyltransferase</fullName>
        <shortName evidence="1">PEP guanylyltransferase</shortName>
        <ecNumber evidence="1">2.7.7.105</ecNumber>
    </recommendedName>
</protein>
<proteinExistence type="inferred from homology"/>
<accession>D1AB53</accession>
<comment type="function">
    <text evidence="1">Guanylyltransferase that catalyzes the activation of phosphoenolpyruvate (PEP) as enolpyruvoyl-2-diphospho-5'-guanosine, via the condensation of PEP with GTP. It is involved in the biosynthesis of coenzyme F420, a hydride carrier cofactor.</text>
</comment>
<comment type="catalytic activity">
    <reaction evidence="1">
        <text>phosphoenolpyruvate + GTP + H(+) = enolpyruvoyl-2-diphospho-5'-guanosine + diphosphate</text>
        <dbReference type="Rhea" id="RHEA:30519"/>
        <dbReference type="ChEBI" id="CHEBI:15378"/>
        <dbReference type="ChEBI" id="CHEBI:33019"/>
        <dbReference type="ChEBI" id="CHEBI:37565"/>
        <dbReference type="ChEBI" id="CHEBI:58702"/>
        <dbReference type="ChEBI" id="CHEBI:143701"/>
        <dbReference type="EC" id="2.7.7.105"/>
    </reaction>
</comment>
<comment type="pathway">
    <text evidence="1">Cofactor biosynthesis; coenzyme F420 biosynthesis.</text>
</comment>
<comment type="similarity">
    <text evidence="1">Belongs to the CofC family.</text>
</comment>
<organism>
    <name type="scientific">Thermomonospora curvata (strain ATCC 19995 / DSM 43183 / JCM 3096 / KCTC 9072 / NBRC 15933 / NCIMB 10081 / Henssen B9)</name>
    <dbReference type="NCBI Taxonomy" id="471852"/>
    <lineage>
        <taxon>Bacteria</taxon>
        <taxon>Bacillati</taxon>
        <taxon>Actinomycetota</taxon>
        <taxon>Actinomycetes</taxon>
        <taxon>Streptosporangiales</taxon>
        <taxon>Thermomonosporaceae</taxon>
        <taxon>Thermomonospora</taxon>
    </lineage>
</organism>
<evidence type="ECO:0000255" key="1">
    <source>
        <dbReference type="HAMAP-Rule" id="MF_02114"/>
    </source>
</evidence>
<dbReference type="EC" id="2.7.7.105" evidence="1"/>
<dbReference type="EMBL" id="CP001738">
    <property type="protein sequence ID" value="ACY98996.1"/>
    <property type="molecule type" value="Genomic_DNA"/>
</dbReference>
<dbReference type="RefSeq" id="WP_012853780.1">
    <property type="nucleotide sequence ID" value="NC_013510.1"/>
</dbReference>
<dbReference type="SMR" id="D1AB53"/>
<dbReference type="STRING" id="471852.Tcur_3458"/>
<dbReference type="KEGG" id="tcu:Tcur_3458"/>
<dbReference type="eggNOG" id="COG1920">
    <property type="taxonomic scope" value="Bacteria"/>
</dbReference>
<dbReference type="HOGENOM" id="CLU_076569_0_0_11"/>
<dbReference type="OrthoDB" id="9151145at2"/>
<dbReference type="UniPathway" id="UPA00071"/>
<dbReference type="Proteomes" id="UP000001918">
    <property type="component" value="Chromosome"/>
</dbReference>
<dbReference type="GO" id="GO:0005525">
    <property type="term" value="F:GTP binding"/>
    <property type="evidence" value="ECO:0007669"/>
    <property type="project" value="UniProtKB-KW"/>
</dbReference>
<dbReference type="GO" id="GO:0043814">
    <property type="term" value="F:phospholactate guanylyltransferase activity"/>
    <property type="evidence" value="ECO:0007669"/>
    <property type="project" value="InterPro"/>
</dbReference>
<dbReference type="GO" id="GO:0052645">
    <property type="term" value="P:F420-0 metabolic process"/>
    <property type="evidence" value="ECO:0007669"/>
    <property type="project" value="UniProtKB-UniRule"/>
</dbReference>
<dbReference type="Gene3D" id="3.90.550.10">
    <property type="entry name" value="Spore Coat Polysaccharide Biosynthesis Protein SpsA, Chain A"/>
    <property type="match status" value="1"/>
</dbReference>
<dbReference type="HAMAP" id="MF_02114">
    <property type="entry name" value="CofC"/>
    <property type="match status" value="1"/>
</dbReference>
<dbReference type="InterPro" id="IPR002835">
    <property type="entry name" value="CofC"/>
</dbReference>
<dbReference type="InterPro" id="IPR029044">
    <property type="entry name" value="Nucleotide-diphossugar_trans"/>
</dbReference>
<dbReference type="NCBIfam" id="TIGR03552">
    <property type="entry name" value="F420_cofC"/>
    <property type="match status" value="1"/>
</dbReference>
<dbReference type="PANTHER" id="PTHR40392">
    <property type="entry name" value="2-PHOSPHO-L-LACTATE GUANYLYLTRANSFERASE"/>
    <property type="match status" value="1"/>
</dbReference>
<dbReference type="PANTHER" id="PTHR40392:SF1">
    <property type="entry name" value="2-PHOSPHO-L-LACTATE GUANYLYLTRANSFERASE"/>
    <property type="match status" value="1"/>
</dbReference>
<dbReference type="Pfam" id="PF01983">
    <property type="entry name" value="CofC"/>
    <property type="match status" value="1"/>
</dbReference>
<dbReference type="SUPFAM" id="SSF53448">
    <property type="entry name" value="Nucleotide-diphospho-sugar transferases"/>
    <property type="match status" value="1"/>
</dbReference>
<name>FBID_THECD</name>